<name>TADA_BUCBP</name>
<accession>Q89AM8</accession>
<organism>
    <name type="scientific">Buchnera aphidicola subsp. Baizongia pistaciae (strain Bp)</name>
    <dbReference type="NCBI Taxonomy" id="224915"/>
    <lineage>
        <taxon>Bacteria</taxon>
        <taxon>Pseudomonadati</taxon>
        <taxon>Pseudomonadota</taxon>
        <taxon>Gammaproteobacteria</taxon>
        <taxon>Enterobacterales</taxon>
        <taxon>Erwiniaceae</taxon>
        <taxon>Buchnera</taxon>
    </lineage>
</organism>
<gene>
    <name evidence="1" type="primary">tadA</name>
    <name type="ordered locus">bbp_236</name>
</gene>
<reference key="1">
    <citation type="journal article" date="2003" name="Proc. Natl. Acad. Sci. U.S.A.">
        <title>Reductive genome evolution in Buchnera aphidicola.</title>
        <authorList>
            <person name="van Ham R.C.H.J."/>
            <person name="Kamerbeek J."/>
            <person name="Palacios C."/>
            <person name="Rausell C."/>
            <person name="Abascal F."/>
            <person name="Bastolla U."/>
            <person name="Fernandez J.M."/>
            <person name="Jimenez L."/>
            <person name="Postigo M."/>
            <person name="Silva F.J."/>
            <person name="Tamames J."/>
            <person name="Viguera E."/>
            <person name="Latorre A."/>
            <person name="Valencia A."/>
            <person name="Moran F."/>
            <person name="Moya A."/>
        </authorList>
    </citation>
    <scope>NUCLEOTIDE SEQUENCE [LARGE SCALE GENOMIC DNA]</scope>
    <source>
        <strain>Bp</strain>
    </source>
</reference>
<evidence type="ECO:0000255" key="1">
    <source>
        <dbReference type="HAMAP-Rule" id="MF_00972"/>
    </source>
</evidence>
<evidence type="ECO:0000255" key="2">
    <source>
        <dbReference type="PROSITE-ProRule" id="PRU01083"/>
    </source>
</evidence>
<sequence>MHDSDKYFMKCAIFLAKISEMIGEVPVGAVLVFNNTIIGKGLNSSILNHDPTAHAEIKALRNGAKFLKNYRLLHTTLYVTLEPCIMCYGAIIHSRISRLVFGAKYKNLQKYICCKNHFFINKNFRKISITQEVLESECSNLLSSFFKRKRKIATKYFNNNII</sequence>
<feature type="chain" id="PRO_0000171731" description="tRNA-specific adenosine deaminase">
    <location>
        <begin position="1"/>
        <end position="162"/>
    </location>
</feature>
<feature type="domain" description="CMP/dCMP-type deaminase" evidence="2">
    <location>
        <begin position="3"/>
        <end position="115"/>
    </location>
</feature>
<feature type="active site" description="Proton donor" evidence="1">
    <location>
        <position position="56"/>
    </location>
</feature>
<feature type="binding site" evidence="1">
    <location>
        <position position="54"/>
    </location>
    <ligand>
        <name>Zn(2+)</name>
        <dbReference type="ChEBI" id="CHEBI:29105"/>
        <note>catalytic</note>
    </ligand>
</feature>
<feature type="binding site" evidence="1">
    <location>
        <position position="84"/>
    </location>
    <ligand>
        <name>Zn(2+)</name>
        <dbReference type="ChEBI" id="CHEBI:29105"/>
        <note>catalytic</note>
    </ligand>
</feature>
<feature type="binding site" evidence="1">
    <location>
        <position position="87"/>
    </location>
    <ligand>
        <name>Zn(2+)</name>
        <dbReference type="ChEBI" id="CHEBI:29105"/>
        <note>catalytic</note>
    </ligand>
</feature>
<keyword id="KW-0378">Hydrolase</keyword>
<keyword id="KW-0479">Metal-binding</keyword>
<keyword id="KW-1185">Reference proteome</keyword>
<keyword id="KW-0819">tRNA processing</keyword>
<keyword id="KW-0862">Zinc</keyword>
<dbReference type="EC" id="3.5.4.33" evidence="1"/>
<dbReference type="EMBL" id="AE016826">
    <property type="protein sequence ID" value="AAO26963.1"/>
    <property type="molecule type" value="Genomic_DNA"/>
</dbReference>
<dbReference type="RefSeq" id="WP_011091364.1">
    <property type="nucleotide sequence ID" value="NC_004545.1"/>
</dbReference>
<dbReference type="SMR" id="Q89AM8"/>
<dbReference type="STRING" id="224915.bbp_236"/>
<dbReference type="KEGG" id="bab:bbp_236"/>
<dbReference type="eggNOG" id="COG0590">
    <property type="taxonomic scope" value="Bacteria"/>
</dbReference>
<dbReference type="HOGENOM" id="CLU_025810_3_0_6"/>
<dbReference type="OrthoDB" id="9802676at2"/>
<dbReference type="Proteomes" id="UP000000601">
    <property type="component" value="Chromosome"/>
</dbReference>
<dbReference type="GO" id="GO:0052717">
    <property type="term" value="F:tRNA-specific adenosine-34 deaminase activity"/>
    <property type="evidence" value="ECO:0007669"/>
    <property type="project" value="UniProtKB-UniRule"/>
</dbReference>
<dbReference type="GO" id="GO:0008270">
    <property type="term" value="F:zinc ion binding"/>
    <property type="evidence" value="ECO:0007669"/>
    <property type="project" value="UniProtKB-UniRule"/>
</dbReference>
<dbReference type="GO" id="GO:0002100">
    <property type="term" value="P:tRNA wobble adenosine to inosine editing"/>
    <property type="evidence" value="ECO:0007669"/>
    <property type="project" value="UniProtKB-UniRule"/>
</dbReference>
<dbReference type="CDD" id="cd01285">
    <property type="entry name" value="nucleoside_deaminase"/>
    <property type="match status" value="1"/>
</dbReference>
<dbReference type="Gene3D" id="3.40.140.10">
    <property type="entry name" value="Cytidine Deaminase, domain 2"/>
    <property type="match status" value="1"/>
</dbReference>
<dbReference type="HAMAP" id="MF_00972">
    <property type="entry name" value="tRNA_aden_deaminase"/>
    <property type="match status" value="1"/>
</dbReference>
<dbReference type="InterPro" id="IPR016192">
    <property type="entry name" value="APOBEC/CMP_deaminase_Zn-bd"/>
</dbReference>
<dbReference type="InterPro" id="IPR002125">
    <property type="entry name" value="CMP_dCMP_dom"/>
</dbReference>
<dbReference type="InterPro" id="IPR016193">
    <property type="entry name" value="Cytidine_deaminase-like"/>
</dbReference>
<dbReference type="InterPro" id="IPR028883">
    <property type="entry name" value="tRNA_aden_deaminase"/>
</dbReference>
<dbReference type="NCBIfam" id="NF008113">
    <property type="entry name" value="PRK10860.1"/>
    <property type="match status" value="1"/>
</dbReference>
<dbReference type="PANTHER" id="PTHR11079">
    <property type="entry name" value="CYTOSINE DEAMINASE FAMILY MEMBER"/>
    <property type="match status" value="1"/>
</dbReference>
<dbReference type="PANTHER" id="PTHR11079:SF202">
    <property type="entry name" value="TRNA-SPECIFIC ADENOSINE DEAMINASE"/>
    <property type="match status" value="1"/>
</dbReference>
<dbReference type="Pfam" id="PF14437">
    <property type="entry name" value="MafB19-deam"/>
    <property type="match status" value="1"/>
</dbReference>
<dbReference type="SUPFAM" id="SSF53927">
    <property type="entry name" value="Cytidine deaminase-like"/>
    <property type="match status" value="1"/>
</dbReference>
<dbReference type="PROSITE" id="PS00903">
    <property type="entry name" value="CYT_DCMP_DEAMINASES_1"/>
    <property type="match status" value="1"/>
</dbReference>
<dbReference type="PROSITE" id="PS51747">
    <property type="entry name" value="CYT_DCMP_DEAMINASES_2"/>
    <property type="match status" value="1"/>
</dbReference>
<comment type="function">
    <text evidence="1">Catalyzes the deamination of adenosine to inosine at the wobble position 34 of tRNA(Arg2).</text>
</comment>
<comment type="catalytic activity">
    <reaction evidence="1">
        <text>adenosine(34) in tRNA + H2O + H(+) = inosine(34) in tRNA + NH4(+)</text>
        <dbReference type="Rhea" id="RHEA:43168"/>
        <dbReference type="Rhea" id="RHEA-COMP:10373"/>
        <dbReference type="Rhea" id="RHEA-COMP:10374"/>
        <dbReference type="ChEBI" id="CHEBI:15377"/>
        <dbReference type="ChEBI" id="CHEBI:15378"/>
        <dbReference type="ChEBI" id="CHEBI:28938"/>
        <dbReference type="ChEBI" id="CHEBI:74411"/>
        <dbReference type="ChEBI" id="CHEBI:82852"/>
        <dbReference type="EC" id="3.5.4.33"/>
    </reaction>
</comment>
<comment type="cofactor">
    <cofactor evidence="1">
        <name>Zn(2+)</name>
        <dbReference type="ChEBI" id="CHEBI:29105"/>
    </cofactor>
    <text evidence="1">Binds 1 zinc ion per subunit.</text>
</comment>
<comment type="subunit">
    <text evidence="1">Homodimer.</text>
</comment>
<comment type="similarity">
    <text evidence="1">Belongs to the cytidine and deoxycytidylate deaminase family.</text>
</comment>
<proteinExistence type="inferred from homology"/>
<protein>
    <recommendedName>
        <fullName evidence="1">tRNA-specific adenosine deaminase</fullName>
        <ecNumber evidence="1">3.5.4.33</ecNumber>
    </recommendedName>
</protein>